<evidence type="ECO:0000255" key="1">
    <source>
        <dbReference type="HAMAP-Rule" id="MF_00075"/>
    </source>
</evidence>
<accession>A5IV12</accession>
<comment type="function">
    <text evidence="1">One of the essential components for the initiation of protein synthesis. Stabilizes the binding of IF-2 and IF-3 on the 30S subunit to which N-formylmethionyl-tRNA(fMet) subsequently binds. Helps modulate mRNA selection, yielding the 30S pre-initiation complex (PIC). Upon addition of the 50S ribosomal subunit IF-1, IF-2 and IF-3 are released leaving the mature 70S translation initiation complex.</text>
</comment>
<comment type="subunit">
    <text evidence="1">Component of the 30S ribosomal translation pre-initiation complex which assembles on the 30S ribosome in the order IF-2 and IF-3, IF-1 and N-formylmethionyl-tRNA(fMet); mRNA recruitment can occur at any time during PIC assembly.</text>
</comment>
<comment type="subcellular location">
    <subcellularLocation>
        <location evidence="1">Cytoplasm</location>
    </subcellularLocation>
</comment>
<comment type="similarity">
    <text evidence="1">Belongs to the IF-1 family.</text>
</comment>
<organism>
    <name type="scientific">Staphylococcus aureus (strain JH9)</name>
    <dbReference type="NCBI Taxonomy" id="359786"/>
    <lineage>
        <taxon>Bacteria</taxon>
        <taxon>Bacillati</taxon>
        <taxon>Bacillota</taxon>
        <taxon>Bacilli</taxon>
        <taxon>Bacillales</taxon>
        <taxon>Staphylococcaceae</taxon>
        <taxon>Staphylococcus</taxon>
    </lineage>
</organism>
<reference key="1">
    <citation type="submission" date="2007-05" db="EMBL/GenBank/DDBJ databases">
        <title>Complete sequence of chromosome of Staphylococcus aureus subsp. aureus JH9.</title>
        <authorList>
            <consortium name="US DOE Joint Genome Institute"/>
            <person name="Copeland A."/>
            <person name="Lucas S."/>
            <person name="Lapidus A."/>
            <person name="Barry K."/>
            <person name="Detter J.C."/>
            <person name="Glavina del Rio T."/>
            <person name="Hammon N."/>
            <person name="Israni S."/>
            <person name="Pitluck S."/>
            <person name="Chain P."/>
            <person name="Malfatti S."/>
            <person name="Shin M."/>
            <person name="Vergez L."/>
            <person name="Schmutz J."/>
            <person name="Larimer F."/>
            <person name="Land M."/>
            <person name="Hauser L."/>
            <person name="Kyrpides N."/>
            <person name="Kim E."/>
            <person name="Tomasz A."/>
            <person name="Richardson P."/>
        </authorList>
    </citation>
    <scope>NUCLEOTIDE SEQUENCE [LARGE SCALE GENOMIC DNA]</scope>
    <source>
        <strain>JH9</strain>
    </source>
</reference>
<keyword id="KW-0963">Cytoplasm</keyword>
<keyword id="KW-0396">Initiation factor</keyword>
<keyword id="KW-0648">Protein biosynthesis</keyword>
<keyword id="KW-0694">RNA-binding</keyword>
<keyword id="KW-0699">rRNA-binding</keyword>
<sequence length="72" mass="8280">MAKQDVIELEGTVLDTLPNAMFKVELENGHEILAHVSGKIRMNYIRILPGDKVTVEMSPYDLTRGRITYRYK</sequence>
<proteinExistence type="inferred from homology"/>
<feature type="chain" id="PRO_0000338930" description="Translation initiation factor IF-1">
    <location>
        <begin position="1"/>
        <end position="72"/>
    </location>
</feature>
<feature type="domain" description="S1-like" evidence="1">
    <location>
        <begin position="1"/>
        <end position="72"/>
    </location>
</feature>
<name>IF1_STAA9</name>
<dbReference type="EMBL" id="CP000703">
    <property type="protein sequence ID" value="ABQ50035.1"/>
    <property type="molecule type" value="Genomic_DNA"/>
</dbReference>
<dbReference type="RefSeq" id="WP_001118443.1">
    <property type="nucleotide sequence ID" value="NC_009487.1"/>
</dbReference>
<dbReference type="SMR" id="A5IV12"/>
<dbReference type="GeneID" id="98346540"/>
<dbReference type="KEGG" id="saj:SaurJH9_2255"/>
<dbReference type="HOGENOM" id="CLU_151267_1_0_9"/>
<dbReference type="GO" id="GO:0005829">
    <property type="term" value="C:cytosol"/>
    <property type="evidence" value="ECO:0007669"/>
    <property type="project" value="TreeGrafter"/>
</dbReference>
<dbReference type="GO" id="GO:0043022">
    <property type="term" value="F:ribosome binding"/>
    <property type="evidence" value="ECO:0007669"/>
    <property type="project" value="UniProtKB-UniRule"/>
</dbReference>
<dbReference type="GO" id="GO:0019843">
    <property type="term" value="F:rRNA binding"/>
    <property type="evidence" value="ECO:0007669"/>
    <property type="project" value="UniProtKB-UniRule"/>
</dbReference>
<dbReference type="GO" id="GO:0003743">
    <property type="term" value="F:translation initiation factor activity"/>
    <property type="evidence" value="ECO:0007669"/>
    <property type="project" value="UniProtKB-UniRule"/>
</dbReference>
<dbReference type="CDD" id="cd04451">
    <property type="entry name" value="S1_IF1"/>
    <property type="match status" value="1"/>
</dbReference>
<dbReference type="FunFam" id="2.40.50.140:FF:000002">
    <property type="entry name" value="Translation initiation factor IF-1"/>
    <property type="match status" value="1"/>
</dbReference>
<dbReference type="Gene3D" id="2.40.50.140">
    <property type="entry name" value="Nucleic acid-binding proteins"/>
    <property type="match status" value="1"/>
</dbReference>
<dbReference type="HAMAP" id="MF_00075">
    <property type="entry name" value="IF_1"/>
    <property type="match status" value="1"/>
</dbReference>
<dbReference type="InterPro" id="IPR012340">
    <property type="entry name" value="NA-bd_OB-fold"/>
</dbReference>
<dbReference type="InterPro" id="IPR006196">
    <property type="entry name" value="RNA-binding_domain_S1_IF1"/>
</dbReference>
<dbReference type="InterPro" id="IPR003029">
    <property type="entry name" value="S1_domain"/>
</dbReference>
<dbReference type="InterPro" id="IPR004368">
    <property type="entry name" value="TIF_IF1"/>
</dbReference>
<dbReference type="NCBIfam" id="TIGR00008">
    <property type="entry name" value="infA"/>
    <property type="match status" value="1"/>
</dbReference>
<dbReference type="PANTHER" id="PTHR33370">
    <property type="entry name" value="TRANSLATION INITIATION FACTOR IF-1, CHLOROPLASTIC"/>
    <property type="match status" value="1"/>
</dbReference>
<dbReference type="PANTHER" id="PTHR33370:SF1">
    <property type="entry name" value="TRANSLATION INITIATION FACTOR IF-1, CHLOROPLASTIC"/>
    <property type="match status" value="1"/>
</dbReference>
<dbReference type="Pfam" id="PF01176">
    <property type="entry name" value="eIF-1a"/>
    <property type="match status" value="1"/>
</dbReference>
<dbReference type="SMART" id="SM00316">
    <property type="entry name" value="S1"/>
    <property type="match status" value="1"/>
</dbReference>
<dbReference type="SUPFAM" id="SSF50249">
    <property type="entry name" value="Nucleic acid-binding proteins"/>
    <property type="match status" value="1"/>
</dbReference>
<dbReference type="PROSITE" id="PS50832">
    <property type="entry name" value="S1_IF1_TYPE"/>
    <property type="match status" value="1"/>
</dbReference>
<gene>
    <name evidence="1" type="primary">infA</name>
    <name type="ordered locus">SaurJH9_2255</name>
</gene>
<protein>
    <recommendedName>
        <fullName evidence="1">Translation initiation factor IF-1</fullName>
    </recommendedName>
</protein>